<feature type="chain" id="PRO_0000438358" description="Uncharacterized protein D806_0077.1">
    <location>
        <begin position="1"/>
        <end position="377"/>
    </location>
</feature>
<feature type="transmembrane region" description="Helical" evidence="1">
    <location>
        <begin position="53"/>
        <end position="73"/>
    </location>
</feature>
<feature type="region of interest" description="Disordered" evidence="2">
    <location>
        <begin position="1"/>
        <end position="46"/>
    </location>
</feature>
<feature type="region of interest" description="Disordered" evidence="2">
    <location>
        <begin position="77"/>
        <end position="107"/>
    </location>
</feature>
<feature type="compositionally biased region" description="Pro residues" evidence="2">
    <location>
        <begin position="14"/>
        <end position="23"/>
    </location>
</feature>
<feature type="compositionally biased region" description="Pro residues" evidence="2">
    <location>
        <begin position="36"/>
        <end position="45"/>
    </location>
</feature>
<name>Y77A_MYCSE</name>
<reference key="1">
    <citation type="journal article" date="2008" name="Mol. Microbiol.">
        <title>The specialized secretory apparatus ESX-1 is essential for DNA transfer in Mycobacterium smegmatis.</title>
        <authorList>
            <person name="Coros A."/>
            <person name="Callahan B."/>
            <person name="Battaglioli E."/>
            <person name="Derbyshire K.M."/>
        </authorList>
    </citation>
    <scope>NUCLEOTIDE SEQUENCE [GENOMIC DNA]</scope>
    <scope>FUNCTION</scope>
    <scope>DISRUPTION PHENOTYPE</scope>
    <source>
        <strain>MKD8</strain>
    </source>
</reference>
<reference key="2">
    <citation type="journal article" date="2013" name="Genome Announc.">
        <title>Draft genome sequence of MKD8, a conjugal recipient Mycobacterium smegmatis strain.</title>
        <authorList>
            <person name="Gray T.A."/>
            <person name="Palumbo M.J."/>
            <person name="Derbyshire K.M."/>
        </authorList>
    </citation>
    <scope>NUCLEOTIDE SEQUENCE [LARGE SCALE GENOMIC DNA]</scope>
    <source>
        <strain>MKD8</strain>
    </source>
</reference>
<reference key="3">
    <citation type="submission" date="2018-03" db="EMBL/GenBank/DDBJ databases">
        <authorList>
            <person name="Derbyshire K."/>
            <person name="Gray T.A."/>
            <person name="Champion M."/>
        </authorList>
    </citation>
    <scope>NUCLEOTIDE SEQUENCE [LARGE SCALE GENOMIC DNA]</scope>
    <source>
        <strain>MKD8</strain>
    </source>
</reference>
<comment type="function">
    <text evidence="3">May be involved in the ESX-1 / type VII specialized secretion system (T7SS), which exports several proteins including EsxA and EsxB (Probable). Involved in DNA conjugation in the recipient strain (PubMed:18554329).</text>
</comment>
<comment type="subcellular location">
    <subcellularLocation>
        <location evidence="1">Cell inner membrane</location>
        <topology evidence="1">Single-pass membrane protein</topology>
    </subcellularLocation>
</comment>
<comment type="disruption phenotype">
    <text evidence="3">Loss of DNA conjugation when disrupted in recipient strain; strain still secretes EsxB (PubMed:18554329).</text>
</comment>
<comment type="miscellaneous">
    <text evidence="5">In the well characterized mc(2)155 strain this gene not present.</text>
</comment>
<comment type="miscellaneous">
    <text evidence="6">DNA conjugation in M.smegmatis is unidirectional with distinct donor and recipient strains; mc(2)155 is a donor strain while MKD8 is a recipient strain. Mutations in a donor strain that alter DNA transfer do not always alter DNA transfer in a recipient strain.</text>
</comment>
<comment type="sequence caution" evidence="5">
    <conflict type="erroneous initiation">
        <sequence resource="EMBL-CDS" id="AWT51070"/>
    </conflict>
    <text>Truncated N-terminus.</text>
</comment>
<gene>
    <name evidence="4" type="ORF">0070R</name>
    <name evidence="7" type="ORF">D806_000760</name>
    <name evidence="5" type="ORF">D806_0077.1</name>
</gene>
<accession>B3GNI9</accession>
<accession>A0A2U9PH69</accession>
<organism>
    <name type="scientific">Mycolicibacterium smegmatis (strain MKD8)</name>
    <name type="common">Mycobacterium smegmatis</name>
    <dbReference type="NCBI Taxonomy" id="1214915"/>
    <lineage>
        <taxon>Bacteria</taxon>
        <taxon>Bacillati</taxon>
        <taxon>Actinomycetota</taxon>
        <taxon>Actinomycetes</taxon>
        <taxon>Mycobacteriales</taxon>
        <taxon>Mycobacteriaceae</taxon>
        <taxon>Mycolicibacterium</taxon>
    </lineage>
</organism>
<sequence>MLAGLRRRGSMTTPPGPEIPPPHQGGFYSAGHHPQRPWPETPPPKTRGGVKWMLGAVALLAVVGVTVAVTLAVTGKDKRDAIPPGSGVSGSPTASDIASADDSGPVSVITEDPTCAAQGPILETFAAQQSQLWVERDPALGRESWSPELRADYEKVGKAMRTAADQVAQLAKITPHRAMRELYEQFIAYARAYADNIPNYTPPTDNLARVAVTAADAISYICAAVSYGSAAARAPLVENRPAPTNVAPLGNPSEPERFLTAPNPVCGEWSSVLNAFQTDTTEWLKTDPDISSSQWSIEQKQINENVIPIMKRFANQLYLLGKDSGNPTFRDIADLSVQYRLAYVAAIPTYTPADKYLANASIRLATMANVACRAAAD</sequence>
<keyword id="KW-0997">Cell inner membrane</keyword>
<keyword id="KW-1003">Cell membrane</keyword>
<keyword id="KW-0472">Membrane</keyword>
<keyword id="KW-0812">Transmembrane</keyword>
<keyword id="KW-1133">Transmembrane helix</keyword>
<proteinExistence type="inferred from homology"/>
<evidence type="ECO:0000255" key="1"/>
<evidence type="ECO:0000256" key="2">
    <source>
        <dbReference type="SAM" id="MobiDB-lite"/>
    </source>
</evidence>
<evidence type="ECO:0000269" key="3">
    <source>
    </source>
</evidence>
<evidence type="ECO:0000303" key="4">
    <source>
    </source>
</evidence>
<evidence type="ECO:0000305" key="5"/>
<evidence type="ECO:0000305" key="6">
    <source>
    </source>
</evidence>
<evidence type="ECO:0000312" key="7">
    <source>
        <dbReference type="EMBL" id="AWT51070.1"/>
    </source>
</evidence>
<dbReference type="EMBL" id="EU711429">
    <property type="protein sequence ID" value="ACE06963.1"/>
    <property type="molecule type" value="Genomic_DNA"/>
</dbReference>
<dbReference type="EMBL" id="CP027541">
    <property type="protein sequence ID" value="AWT51070.1"/>
    <property type="status" value="ALT_INIT"/>
    <property type="molecule type" value="Genomic_DNA"/>
</dbReference>
<dbReference type="SMR" id="B3GNI9"/>
<dbReference type="Proteomes" id="UP000011200">
    <property type="component" value="Chromosome"/>
</dbReference>
<dbReference type="GO" id="GO:0005886">
    <property type="term" value="C:plasma membrane"/>
    <property type="evidence" value="ECO:0007669"/>
    <property type="project" value="UniProtKB-SubCell"/>
</dbReference>
<protein>
    <recommendedName>
        <fullName evidence="5">Uncharacterized protein D806_0077.1</fullName>
    </recommendedName>
</protein>